<organism>
    <name type="scientific">Halothermothrix orenii (strain H 168 / OCM 544 / DSM 9562)</name>
    <dbReference type="NCBI Taxonomy" id="373903"/>
    <lineage>
        <taxon>Bacteria</taxon>
        <taxon>Bacillati</taxon>
        <taxon>Bacillota</taxon>
        <taxon>Clostridia</taxon>
        <taxon>Halanaerobiales</taxon>
        <taxon>Halothermotrichaceae</taxon>
        <taxon>Halothermothrix</taxon>
    </lineage>
</organism>
<sequence length="143" mass="16465">MFMGEYKHNMDSKGRIIIPAKFRSELGDKFVATRGLDHCLFVYPMHEWSKLEKKLTSLPITSKNARTFVRFFFSGATECEFDKQGRISIPSNLREYAELQKEVVIIGLANRIELWSSKRWGGYLDSAEESYEEIAAAMEDLGI</sequence>
<name>MRAZ_HALOH</name>
<proteinExistence type="inferred from homology"/>
<evidence type="ECO:0000255" key="1">
    <source>
        <dbReference type="HAMAP-Rule" id="MF_01008"/>
    </source>
</evidence>
<evidence type="ECO:0000255" key="2">
    <source>
        <dbReference type="PROSITE-ProRule" id="PRU01076"/>
    </source>
</evidence>
<feature type="chain" id="PRO_1000148859" description="Transcriptional regulator MraZ">
    <location>
        <begin position="1"/>
        <end position="143"/>
    </location>
</feature>
<feature type="domain" description="SpoVT-AbrB 1" evidence="2">
    <location>
        <begin position="5"/>
        <end position="47"/>
    </location>
</feature>
<feature type="domain" description="SpoVT-AbrB 2" evidence="2">
    <location>
        <begin position="76"/>
        <end position="119"/>
    </location>
</feature>
<accession>B8CWI7</accession>
<keyword id="KW-0963">Cytoplasm</keyword>
<keyword id="KW-0238">DNA-binding</keyword>
<keyword id="KW-1185">Reference proteome</keyword>
<keyword id="KW-0677">Repeat</keyword>
<keyword id="KW-0804">Transcription</keyword>
<keyword id="KW-0805">Transcription regulation</keyword>
<reference key="1">
    <citation type="journal article" date="2009" name="PLoS ONE">
        <title>Genome analysis of the anaerobic thermohalophilic bacterium Halothermothrix orenii.</title>
        <authorList>
            <person name="Mavromatis K."/>
            <person name="Ivanova N."/>
            <person name="Anderson I."/>
            <person name="Lykidis A."/>
            <person name="Hooper S.D."/>
            <person name="Sun H."/>
            <person name="Kunin V."/>
            <person name="Lapidus A."/>
            <person name="Hugenholtz P."/>
            <person name="Patel B."/>
            <person name="Kyrpides N.C."/>
        </authorList>
    </citation>
    <scope>NUCLEOTIDE SEQUENCE [LARGE SCALE GENOMIC DNA]</scope>
    <source>
        <strain>H 168 / OCM 544 / DSM 9562</strain>
    </source>
</reference>
<gene>
    <name evidence="1" type="primary">mraZ</name>
    <name type="ordered locus">Hore_09000</name>
</gene>
<dbReference type="EMBL" id="CP001098">
    <property type="protein sequence ID" value="ACL69656.1"/>
    <property type="molecule type" value="Genomic_DNA"/>
</dbReference>
<dbReference type="RefSeq" id="WP_012635843.1">
    <property type="nucleotide sequence ID" value="NC_011899.1"/>
</dbReference>
<dbReference type="SMR" id="B8CWI7"/>
<dbReference type="STRING" id="373903.Hore_09000"/>
<dbReference type="KEGG" id="hor:Hore_09000"/>
<dbReference type="eggNOG" id="COG2001">
    <property type="taxonomic scope" value="Bacteria"/>
</dbReference>
<dbReference type="HOGENOM" id="CLU_107907_0_5_9"/>
<dbReference type="OrthoDB" id="9807753at2"/>
<dbReference type="Proteomes" id="UP000000719">
    <property type="component" value="Chromosome"/>
</dbReference>
<dbReference type="GO" id="GO:0005737">
    <property type="term" value="C:cytoplasm"/>
    <property type="evidence" value="ECO:0007669"/>
    <property type="project" value="UniProtKB-UniRule"/>
</dbReference>
<dbReference type="GO" id="GO:0009295">
    <property type="term" value="C:nucleoid"/>
    <property type="evidence" value="ECO:0007669"/>
    <property type="project" value="UniProtKB-SubCell"/>
</dbReference>
<dbReference type="GO" id="GO:0003700">
    <property type="term" value="F:DNA-binding transcription factor activity"/>
    <property type="evidence" value="ECO:0007669"/>
    <property type="project" value="UniProtKB-UniRule"/>
</dbReference>
<dbReference type="GO" id="GO:0000976">
    <property type="term" value="F:transcription cis-regulatory region binding"/>
    <property type="evidence" value="ECO:0007669"/>
    <property type="project" value="TreeGrafter"/>
</dbReference>
<dbReference type="GO" id="GO:2000143">
    <property type="term" value="P:negative regulation of DNA-templated transcription initiation"/>
    <property type="evidence" value="ECO:0007669"/>
    <property type="project" value="TreeGrafter"/>
</dbReference>
<dbReference type="CDD" id="cd16321">
    <property type="entry name" value="MraZ_C"/>
    <property type="match status" value="1"/>
</dbReference>
<dbReference type="CDD" id="cd16320">
    <property type="entry name" value="MraZ_N"/>
    <property type="match status" value="1"/>
</dbReference>
<dbReference type="FunFam" id="3.40.1550.20:FF:000002">
    <property type="entry name" value="Transcriptional regulator MraZ"/>
    <property type="match status" value="1"/>
</dbReference>
<dbReference type="Gene3D" id="3.40.1550.20">
    <property type="entry name" value="Transcriptional regulator MraZ domain"/>
    <property type="match status" value="1"/>
</dbReference>
<dbReference type="HAMAP" id="MF_01008">
    <property type="entry name" value="MraZ"/>
    <property type="match status" value="1"/>
</dbReference>
<dbReference type="InterPro" id="IPR003444">
    <property type="entry name" value="MraZ"/>
</dbReference>
<dbReference type="InterPro" id="IPR035644">
    <property type="entry name" value="MraZ_C"/>
</dbReference>
<dbReference type="InterPro" id="IPR020603">
    <property type="entry name" value="MraZ_dom"/>
</dbReference>
<dbReference type="InterPro" id="IPR035642">
    <property type="entry name" value="MraZ_N"/>
</dbReference>
<dbReference type="InterPro" id="IPR038619">
    <property type="entry name" value="MraZ_sf"/>
</dbReference>
<dbReference type="InterPro" id="IPR007159">
    <property type="entry name" value="SpoVT-AbrB_dom"/>
</dbReference>
<dbReference type="InterPro" id="IPR037914">
    <property type="entry name" value="SpoVT-AbrB_sf"/>
</dbReference>
<dbReference type="NCBIfam" id="TIGR00242">
    <property type="entry name" value="division/cell wall cluster transcriptional repressor MraZ"/>
    <property type="match status" value="1"/>
</dbReference>
<dbReference type="PANTHER" id="PTHR34701">
    <property type="entry name" value="TRANSCRIPTIONAL REGULATOR MRAZ"/>
    <property type="match status" value="1"/>
</dbReference>
<dbReference type="PANTHER" id="PTHR34701:SF1">
    <property type="entry name" value="TRANSCRIPTIONAL REGULATOR MRAZ"/>
    <property type="match status" value="1"/>
</dbReference>
<dbReference type="Pfam" id="PF02381">
    <property type="entry name" value="MraZ"/>
    <property type="match status" value="2"/>
</dbReference>
<dbReference type="SUPFAM" id="SSF89447">
    <property type="entry name" value="AbrB/MazE/MraZ-like"/>
    <property type="match status" value="1"/>
</dbReference>
<dbReference type="PROSITE" id="PS51740">
    <property type="entry name" value="SPOVT_ABRB"/>
    <property type="match status" value="2"/>
</dbReference>
<comment type="subunit">
    <text evidence="1">Forms oligomers.</text>
</comment>
<comment type="subcellular location">
    <subcellularLocation>
        <location evidence="1">Cytoplasm</location>
        <location evidence="1">Nucleoid</location>
    </subcellularLocation>
</comment>
<comment type="similarity">
    <text evidence="1">Belongs to the MraZ family.</text>
</comment>
<protein>
    <recommendedName>
        <fullName>Transcriptional regulator MraZ</fullName>
    </recommendedName>
</protein>